<keyword id="KW-1003">Cell membrane</keyword>
<keyword id="KW-0134">Cell wall</keyword>
<keyword id="KW-0472">Membrane</keyword>
<keyword id="KW-0964">Secreted</keyword>
<keyword id="KW-0812">Transmembrane</keyword>
<keyword id="KW-1133">Transmembrane helix</keyword>
<accession>Q5HDM2</accession>
<gene>
    <name type="primary">lyrA</name>
    <name evidence="1" type="synonym">spdC</name>
    <name type="ordered locus">SACOL2328</name>
</gene>
<name>LYRA_STAAC</name>
<sequence>MKNNKISGFQWAMTIFVFFVITMALSIMLRDFQSIIGVKHFIFEVTDLAPLIAAIICILVFKYKKVQLAGLKFSISLKVIERLLLALILPLIILIIGMYSFNTFADSFILLQSTGLSVPITHILIGHILMAFVVEFGFRSYLQNIVETKMNTFFASIVVGLMYSVFSANTTYGTEFAAYNFLYTFSFSMILGELIRATKGRTIYIATTFHASMTFGLIFLFSEEIGDLFSIKVIAISTAIVAVGYIGLSLIIRGIAYLTTRRNLEELEPNNYLDHVNDDEETNHTEAEKSSSNIKDAEKTGVATASTVGVAKNDTENTVADEPSIHEGTEKTEPQHHIGNQTESNHDEDHDITSESVESAESVKQAPQSDDLTNDSNEDEIEQSLKEPVTYKEDRRSSVVIDAEKHIEKTEEQSSDKNK</sequence>
<organism>
    <name type="scientific">Staphylococcus aureus (strain COL)</name>
    <dbReference type="NCBI Taxonomy" id="93062"/>
    <lineage>
        <taxon>Bacteria</taxon>
        <taxon>Bacillati</taxon>
        <taxon>Bacillota</taxon>
        <taxon>Bacilli</taxon>
        <taxon>Bacillales</taxon>
        <taxon>Staphylococcaceae</taxon>
        <taxon>Staphylococcus</taxon>
    </lineage>
</organism>
<evidence type="ECO:0000250" key="1">
    <source>
        <dbReference type="UniProtKB" id="A0A0H3KA40"/>
    </source>
</evidence>
<evidence type="ECO:0000250" key="2">
    <source>
        <dbReference type="UniProtKB" id="Q2FVT1"/>
    </source>
</evidence>
<evidence type="ECO:0000255" key="3"/>
<evidence type="ECO:0000256" key="4">
    <source>
        <dbReference type="SAM" id="MobiDB-lite"/>
    </source>
</evidence>
<evidence type="ECO:0000305" key="5"/>
<comment type="function">
    <text evidence="1 2">Involved in bacterial cell envelope homeostasis. Regulates peptidoglycan processing by N-acetylglucosaminidase SagB, perhaps acting as a scaffold protein. Pleiotropic regulator of gene expression, probably acting via interactions with multiple two-component systems (By similarity). Plays a role in the abundant deposition of the immunoglobulin G-binding protein A (spa) at the cross-wall, a subcellular structure that initially arises from cytokinesis (By similarity).</text>
</comment>
<comment type="subunit">
    <text evidence="2">Interacts with N-acetylglucosaminidase SagB; interaction is direct and facilitates peptidoglycan processing. Interacts (via N-terminal region including transmembrane domains) with sensor protein kinase WalK (via N-terminal region including transmembrane domains). Interacts (via N-terminal region including transmembrane domains) with sensor protein kinase SaeS. Interacts with other histidine kinases, perhaps via their transmembrane domains.</text>
</comment>
<comment type="subcellular location">
    <subcellularLocation>
        <location evidence="2">Cell membrane</location>
        <topology evidence="2">Multi-pass membrane protein</topology>
    </subcellularLocation>
    <subcellularLocation>
        <location evidence="1">Secreted</location>
        <location evidence="1">Cell wall</location>
    </subcellularLocation>
    <subcellularLocation>
        <location evidence="2">Cell septum</location>
    </subcellularLocation>
    <text evidence="1">Localization to the cross-wall is enriched in dividing cells.</text>
</comment>
<comment type="domain">
    <text evidence="2">C-terminal region not involved in glucosaminidase activity of the SagB-SpdC/LyrA complex.</text>
</comment>
<comment type="similarity">
    <text evidence="5">Belongs to the LyrA family.</text>
</comment>
<protein>
    <recommendedName>
        <fullName>Lysostaphin resistance protein A</fullName>
    </recommendedName>
    <alternativeName>
        <fullName evidence="1">Surface protein display C</fullName>
    </alternativeName>
</protein>
<dbReference type="EMBL" id="CP000046">
    <property type="protein sequence ID" value="AAW37157.1"/>
    <property type="molecule type" value="Genomic_DNA"/>
</dbReference>
<dbReference type="RefSeq" id="WP_000794443.1">
    <property type="nucleotide sequence ID" value="NZ_JBGOFO010000004.1"/>
</dbReference>
<dbReference type="SMR" id="Q5HDM2"/>
<dbReference type="KEGG" id="sac:SACOL2328"/>
<dbReference type="HOGENOM" id="CLU_046135_0_0_9"/>
<dbReference type="Proteomes" id="UP000000530">
    <property type="component" value="Chromosome"/>
</dbReference>
<dbReference type="GO" id="GO:0005886">
    <property type="term" value="C:plasma membrane"/>
    <property type="evidence" value="ECO:0007669"/>
    <property type="project" value="UniProtKB-SubCell"/>
</dbReference>
<dbReference type="GO" id="GO:0004175">
    <property type="term" value="F:endopeptidase activity"/>
    <property type="evidence" value="ECO:0007669"/>
    <property type="project" value="UniProtKB-ARBA"/>
</dbReference>
<dbReference type="GO" id="GO:0080120">
    <property type="term" value="P:CAAX-box protein maturation"/>
    <property type="evidence" value="ECO:0007669"/>
    <property type="project" value="UniProtKB-ARBA"/>
</dbReference>
<dbReference type="InterPro" id="IPR003675">
    <property type="entry name" value="Rce1/LyrA-like_dom"/>
</dbReference>
<dbReference type="Pfam" id="PF02517">
    <property type="entry name" value="Rce1-like"/>
    <property type="match status" value="1"/>
</dbReference>
<feature type="chain" id="PRO_0000274821" description="Lysostaphin resistance protein A">
    <location>
        <begin position="1"/>
        <end position="419"/>
    </location>
</feature>
<feature type="transmembrane region" description="Helical" evidence="3">
    <location>
        <begin position="9"/>
        <end position="29"/>
    </location>
</feature>
<feature type="transmembrane region" description="Helical" evidence="3">
    <location>
        <begin position="41"/>
        <end position="61"/>
    </location>
</feature>
<feature type="transmembrane region" description="Helical" evidence="3">
    <location>
        <begin position="84"/>
        <end position="104"/>
    </location>
</feature>
<feature type="transmembrane region" description="Helical" evidence="3">
    <location>
        <begin position="118"/>
        <end position="138"/>
    </location>
</feature>
<feature type="transmembrane region" description="Helical" evidence="3">
    <location>
        <begin position="153"/>
        <end position="173"/>
    </location>
</feature>
<feature type="transmembrane region" description="Helical" evidence="3">
    <location>
        <begin position="175"/>
        <end position="195"/>
    </location>
</feature>
<feature type="transmembrane region" description="Helical" evidence="3">
    <location>
        <begin position="202"/>
        <end position="222"/>
    </location>
</feature>
<feature type="transmembrane region" description="Helical" evidence="3">
    <location>
        <begin position="231"/>
        <end position="251"/>
    </location>
</feature>
<feature type="region of interest" description="Disordered" evidence="4">
    <location>
        <begin position="273"/>
        <end position="419"/>
    </location>
</feature>
<feature type="compositionally biased region" description="Basic and acidic residues" evidence="4">
    <location>
        <begin position="282"/>
        <end position="299"/>
    </location>
</feature>
<feature type="compositionally biased region" description="Basic and acidic residues" evidence="4">
    <location>
        <begin position="323"/>
        <end position="336"/>
    </location>
</feature>
<feature type="compositionally biased region" description="Basic and acidic residues" evidence="4">
    <location>
        <begin position="344"/>
        <end position="353"/>
    </location>
</feature>
<feature type="compositionally biased region" description="Acidic residues" evidence="4">
    <location>
        <begin position="372"/>
        <end position="382"/>
    </location>
</feature>
<feature type="compositionally biased region" description="Basic and acidic residues" evidence="4">
    <location>
        <begin position="383"/>
        <end position="419"/>
    </location>
</feature>
<proteinExistence type="inferred from homology"/>
<reference key="1">
    <citation type="journal article" date="2005" name="J. Bacteriol.">
        <title>Insights on evolution of virulence and resistance from the complete genome analysis of an early methicillin-resistant Staphylococcus aureus strain and a biofilm-producing methicillin-resistant Staphylococcus epidermidis strain.</title>
        <authorList>
            <person name="Gill S.R."/>
            <person name="Fouts D.E."/>
            <person name="Archer G.L."/>
            <person name="Mongodin E.F."/>
            <person name="DeBoy R.T."/>
            <person name="Ravel J."/>
            <person name="Paulsen I.T."/>
            <person name="Kolonay J.F."/>
            <person name="Brinkac L.M."/>
            <person name="Beanan M.J."/>
            <person name="Dodson R.J."/>
            <person name="Daugherty S.C."/>
            <person name="Madupu R."/>
            <person name="Angiuoli S.V."/>
            <person name="Durkin A.S."/>
            <person name="Haft D.H."/>
            <person name="Vamathevan J.J."/>
            <person name="Khouri H."/>
            <person name="Utterback T.R."/>
            <person name="Lee C."/>
            <person name="Dimitrov G."/>
            <person name="Jiang L."/>
            <person name="Qin H."/>
            <person name="Weidman J."/>
            <person name="Tran K."/>
            <person name="Kang K.H."/>
            <person name="Hance I.R."/>
            <person name="Nelson K.E."/>
            <person name="Fraser C.M."/>
        </authorList>
    </citation>
    <scope>NUCLEOTIDE SEQUENCE [LARGE SCALE GENOMIC DNA]</scope>
    <source>
        <strain>COL</strain>
    </source>
</reference>